<accession>A5DIP0</accession>
<proteinExistence type="inferred from homology"/>
<feature type="chain" id="PRO_0000294621" description="ATP-dependent RNA helicase DHH1">
    <location>
        <begin position="1"/>
        <end position="547"/>
    </location>
</feature>
<feature type="domain" description="Helicase ATP-binding" evidence="2">
    <location>
        <begin position="60"/>
        <end position="230"/>
    </location>
</feature>
<feature type="domain" description="Helicase C-terminal" evidence="3">
    <location>
        <begin position="240"/>
        <end position="400"/>
    </location>
</feature>
<feature type="region of interest" description="Disordered" evidence="4">
    <location>
        <begin position="1"/>
        <end position="27"/>
    </location>
</feature>
<feature type="region of interest" description="Disordered" evidence="4">
    <location>
        <begin position="412"/>
        <end position="547"/>
    </location>
</feature>
<feature type="short sequence motif" description="Q motif">
    <location>
        <begin position="29"/>
        <end position="57"/>
    </location>
</feature>
<feature type="short sequence motif" description="DEAD box">
    <location>
        <begin position="178"/>
        <end position="181"/>
    </location>
</feature>
<feature type="compositionally biased region" description="Basic and acidic residues" evidence="4">
    <location>
        <begin position="14"/>
        <end position="27"/>
    </location>
</feature>
<feature type="compositionally biased region" description="Basic and acidic residues" evidence="4">
    <location>
        <begin position="413"/>
        <end position="424"/>
    </location>
</feature>
<feature type="compositionally biased region" description="Polar residues" evidence="4">
    <location>
        <begin position="436"/>
        <end position="456"/>
    </location>
</feature>
<feature type="compositionally biased region" description="Low complexity" evidence="4">
    <location>
        <begin position="457"/>
        <end position="509"/>
    </location>
</feature>
<feature type="compositionally biased region" description="Polar residues" evidence="4">
    <location>
        <begin position="521"/>
        <end position="547"/>
    </location>
</feature>
<feature type="binding site" evidence="2">
    <location>
        <begin position="73"/>
        <end position="80"/>
    </location>
    <ligand>
        <name>ATP</name>
        <dbReference type="ChEBI" id="CHEBI:30616"/>
    </ligand>
</feature>
<organism>
    <name type="scientific">Meyerozyma guilliermondii (strain ATCC 6260 / CBS 566 / DSM 6381 / JCM 1539 / NBRC 10279 / NRRL Y-324)</name>
    <name type="common">Yeast</name>
    <name type="synonym">Candida guilliermondii</name>
    <dbReference type="NCBI Taxonomy" id="294746"/>
    <lineage>
        <taxon>Eukaryota</taxon>
        <taxon>Fungi</taxon>
        <taxon>Dikarya</taxon>
        <taxon>Ascomycota</taxon>
        <taxon>Saccharomycotina</taxon>
        <taxon>Pichiomycetes</taxon>
        <taxon>Debaryomycetaceae</taxon>
        <taxon>Meyerozyma</taxon>
    </lineage>
</organism>
<keyword id="KW-0067">ATP-binding</keyword>
<keyword id="KW-0963">Cytoplasm</keyword>
<keyword id="KW-0347">Helicase</keyword>
<keyword id="KW-0378">Hydrolase</keyword>
<keyword id="KW-0507">mRNA processing</keyword>
<keyword id="KW-0509">mRNA transport</keyword>
<keyword id="KW-0547">Nucleotide-binding</keyword>
<keyword id="KW-1185">Reference proteome</keyword>
<keyword id="KW-0694">RNA-binding</keyword>
<keyword id="KW-0810">Translation regulation</keyword>
<keyword id="KW-0813">Transport</keyword>
<reference key="1">
    <citation type="journal article" date="2009" name="Nature">
        <title>Evolution of pathogenicity and sexual reproduction in eight Candida genomes.</title>
        <authorList>
            <person name="Butler G."/>
            <person name="Rasmussen M.D."/>
            <person name="Lin M.F."/>
            <person name="Santos M.A.S."/>
            <person name="Sakthikumar S."/>
            <person name="Munro C.A."/>
            <person name="Rheinbay E."/>
            <person name="Grabherr M."/>
            <person name="Forche A."/>
            <person name="Reedy J.L."/>
            <person name="Agrafioti I."/>
            <person name="Arnaud M.B."/>
            <person name="Bates S."/>
            <person name="Brown A.J.P."/>
            <person name="Brunke S."/>
            <person name="Costanzo M.C."/>
            <person name="Fitzpatrick D.A."/>
            <person name="de Groot P.W.J."/>
            <person name="Harris D."/>
            <person name="Hoyer L.L."/>
            <person name="Hube B."/>
            <person name="Klis F.M."/>
            <person name="Kodira C."/>
            <person name="Lennard N."/>
            <person name="Logue M.E."/>
            <person name="Martin R."/>
            <person name="Neiman A.M."/>
            <person name="Nikolaou E."/>
            <person name="Quail M.A."/>
            <person name="Quinn J."/>
            <person name="Santos M.C."/>
            <person name="Schmitzberger F.F."/>
            <person name="Sherlock G."/>
            <person name="Shah P."/>
            <person name="Silverstein K.A.T."/>
            <person name="Skrzypek M.S."/>
            <person name="Soll D."/>
            <person name="Staggs R."/>
            <person name="Stansfield I."/>
            <person name="Stumpf M.P.H."/>
            <person name="Sudbery P.E."/>
            <person name="Srikantha T."/>
            <person name="Zeng Q."/>
            <person name="Berman J."/>
            <person name="Berriman M."/>
            <person name="Heitman J."/>
            <person name="Gow N.A.R."/>
            <person name="Lorenz M.C."/>
            <person name="Birren B.W."/>
            <person name="Kellis M."/>
            <person name="Cuomo C.A."/>
        </authorList>
    </citation>
    <scope>NUCLEOTIDE SEQUENCE [LARGE SCALE GENOMIC DNA]</scope>
    <source>
        <strain>ATCC 6260 / CBS 566 / DSM 6381 / JCM 1539 / NBRC 10279 / NRRL Y-324</strain>
    </source>
</reference>
<name>DHH1_PICGU</name>
<gene>
    <name type="primary">DHH1</name>
    <name type="ORF">PGUG_03141</name>
</gene>
<comment type="function">
    <text evidence="1">ATP-dependent RNA helicase involved in mRNA turnover, and more specifically in mRNA decapping by activating the decapping enzyme DCP1. Is involved in G1/S DNA-damage checkpoint recovery, probably through the regulation of the translational status of a subset of mRNAs. May also have a role in translation and mRNA nuclear export (By similarity).</text>
</comment>
<comment type="catalytic activity">
    <reaction>
        <text>ATP + H2O = ADP + phosphate + H(+)</text>
        <dbReference type="Rhea" id="RHEA:13065"/>
        <dbReference type="ChEBI" id="CHEBI:15377"/>
        <dbReference type="ChEBI" id="CHEBI:15378"/>
        <dbReference type="ChEBI" id="CHEBI:30616"/>
        <dbReference type="ChEBI" id="CHEBI:43474"/>
        <dbReference type="ChEBI" id="CHEBI:456216"/>
        <dbReference type="EC" id="3.6.4.13"/>
    </reaction>
</comment>
<comment type="subcellular location">
    <subcellularLocation>
        <location evidence="1">Cytoplasm</location>
        <location evidence="1">P-body</location>
    </subcellularLocation>
    <text evidence="1">Is concentrated in several cytoplasmic foci called P bodies (or cytoplasmic processing bodies) which represent sites of mRNA decapping and 5' to 3' exonucleotidic decay.</text>
</comment>
<comment type="domain">
    <text>The Q motif is unique to and characteristic of the DEAD box family of RNA helicases and controls ATP binding and hydrolysis.</text>
</comment>
<comment type="similarity">
    <text evidence="5">Belongs to the DEAD box helicase family. DDX6/DHH1 subfamily.</text>
</comment>
<protein>
    <recommendedName>
        <fullName>ATP-dependent RNA helicase DHH1</fullName>
        <ecNumber>3.6.4.13</ecNumber>
    </recommendedName>
</protein>
<evidence type="ECO:0000250" key="1"/>
<evidence type="ECO:0000255" key="2">
    <source>
        <dbReference type="PROSITE-ProRule" id="PRU00541"/>
    </source>
</evidence>
<evidence type="ECO:0000255" key="3">
    <source>
        <dbReference type="PROSITE-ProRule" id="PRU00542"/>
    </source>
</evidence>
<evidence type="ECO:0000256" key="4">
    <source>
        <dbReference type="SAM" id="MobiDB-lite"/>
    </source>
</evidence>
<evidence type="ECO:0000305" key="5"/>
<sequence>MSDDWKANLNIPAKDSRPQTEDVTKTQGKSFEEFGLKRELLMGIFEAGFEKPSPIQEESIPMALAGRDILARAKNGTGKTASFIIPALQQVKTKLNKIQVLILVPTRELALQTSQVVKTLGKHLKLQCMVTTGGTLLRDDVMRLDEPVHILVGTPGRVLDLAARSIADFSECPMFVMDEADKMLSREFKGIIEQILEFFPKNRQSLLFSATFPLAVKSFMDKHLNKPYEINLMDELTLRGISQFYAFVEEKQKLHCLNTLFSKLKINQAIIFCNSTNRVELLAKKITELGYSCYYSHAKMPQQARNKVFHEFRQGSVRTLVCSDLLTRGIDIQAVNVVINFDFPKTAETYLHRIGRSGRFGHLGLAINFIHWDDRKSLFNIETELGTEIKPIPSDIDRSLYVTEDEASIPRPFKIDELPKGNEHSRKRNGYEYRGQPTSQGFPQQPPQANTGYNQVPQGSPQAQGLQGSPQGLQGSPQGIPQGSPQGIPQGIPQGLPQGVPQFPQGYPQGIPPQGPQAYQNYQIPPQQVPAQFNGHSQYSQYQSQPF</sequence>
<dbReference type="EC" id="3.6.4.13"/>
<dbReference type="EMBL" id="CH408157">
    <property type="protein sequence ID" value="EDK39043.1"/>
    <property type="molecule type" value="Genomic_DNA"/>
</dbReference>
<dbReference type="RefSeq" id="XP_001485412.1">
    <property type="nucleotide sequence ID" value="XM_001485362.1"/>
</dbReference>
<dbReference type="SMR" id="A5DIP0"/>
<dbReference type="FunCoup" id="A5DIP0">
    <property type="interactions" value="1334"/>
</dbReference>
<dbReference type="STRING" id="294746.A5DIP0"/>
<dbReference type="GeneID" id="5126923"/>
<dbReference type="KEGG" id="pgu:PGUG_03141"/>
<dbReference type="VEuPathDB" id="FungiDB:PGUG_03141"/>
<dbReference type="eggNOG" id="KOG0326">
    <property type="taxonomic scope" value="Eukaryota"/>
</dbReference>
<dbReference type="HOGENOM" id="CLU_003041_30_2_1"/>
<dbReference type="InParanoid" id="A5DIP0"/>
<dbReference type="OMA" id="TYEDRHT"/>
<dbReference type="OrthoDB" id="10265785at2759"/>
<dbReference type="Proteomes" id="UP000001997">
    <property type="component" value="Unassembled WGS sequence"/>
</dbReference>
<dbReference type="GO" id="GO:0098562">
    <property type="term" value="C:cytoplasmic side of membrane"/>
    <property type="evidence" value="ECO:0007669"/>
    <property type="project" value="EnsemblFungi"/>
</dbReference>
<dbReference type="GO" id="GO:0010494">
    <property type="term" value="C:cytoplasmic stress granule"/>
    <property type="evidence" value="ECO:0007669"/>
    <property type="project" value="EnsemblFungi"/>
</dbReference>
<dbReference type="GO" id="GO:0000932">
    <property type="term" value="C:P-body"/>
    <property type="evidence" value="ECO:0007669"/>
    <property type="project" value="UniProtKB-SubCell"/>
</dbReference>
<dbReference type="GO" id="GO:0005524">
    <property type="term" value="F:ATP binding"/>
    <property type="evidence" value="ECO:0007669"/>
    <property type="project" value="UniProtKB-KW"/>
</dbReference>
<dbReference type="GO" id="GO:0016887">
    <property type="term" value="F:ATP hydrolysis activity"/>
    <property type="evidence" value="ECO:0007669"/>
    <property type="project" value="EnsemblFungi"/>
</dbReference>
<dbReference type="GO" id="GO:0003682">
    <property type="term" value="F:chromatin binding"/>
    <property type="evidence" value="ECO:0007669"/>
    <property type="project" value="EnsemblFungi"/>
</dbReference>
<dbReference type="GO" id="GO:0003729">
    <property type="term" value="F:mRNA binding"/>
    <property type="evidence" value="ECO:0007669"/>
    <property type="project" value="EnsemblFungi"/>
</dbReference>
<dbReference type="GO" id="GO:0003724">
    <property type="term" value="F:RNA helicase activity"/>
    <property type="evidence" value="ECO:0007669"/>
    <property type="project" value="UniProtKB-EC"/>
</dbReference>
<dbReference type="GO" id="GO:0042149">
    <property type="term" value="P:cellular response to glucose starvation"/>
    <property type="evidence" value="ECO:0007669"/>
    <property type="project" value="EnsemblFungi"/>
</dbReference>
<dbReference type="GO" id="GO:0006995">
    <property type="term" value="P:cellular response to nitrogen starvation"/>
    <property type="evidence" value="ECO:0007669"/>
    <property type="project" value="EnsemblFungi"/>
</dbReference>
<dbReference type="GO" id="GO:0000290">
    <property type="term" value="P:deadenylation-dependent decapping of nuclear-transcribed mRNA"/>
    <property type="evidence" value="ECO:0007669"/>
    <property type="project" value="EnsemblFungi"/>
</dbReference>
<dbReference type="GO" id="GO:0036267">
    <property type="term" value="P:invasive filamentous growth"/>
    <property type="evidence" value="ECO:0007669"/>
    <property type="project" value="EnsemblFungi"/>
</dbReference>
<dbReference type="GO" id="GO:0006397">
    <property type="term" value="P:mRNA processing"/>
    <property type="evidence" value="ECO:0007669"/>
    <property type="project" value="UniProtKB-KW"/>
</dbReference>
<dbReference type="GO" id="GO:0051028">
    <property type="term" value="P:mRNA transport"/>
    <property type="evidence" value="ECO:0007669"/>
    <property type="project" value="UniProtKB-KW"/>
</dbReference>
<dbReference type="GO" id="GO:0045900">
    <property type="term" value="P:negative regulation of translational elongation"/>
    <property type="evidence" value="ECO:0007669"/>
    <property type="project" value="EnsemblFungi"/>
</dbReference>
<dbReference type="GO" id="GO:0033962">
    <property type="term" value="P:P-body assembly"/>
    <property type="evidence" value="ECO:0007669"/>
    <property type="project" value="EnsemblFungi"/>
</dbReference>
<dbReference type="GO" id="GO:0045727">
    <property type="term" value="P:positive regulation of translation"/>
    <property type="evidence" value="ECO:0007669"/>
    <property type="project" value="EnsemblFungi"/>
</dbReference>
<dbReference type="GO" id="GO:0007124">
    <property type="term" value="P:pseudohyphal growth"/>
    <property type="evidence" value="ECO:0007669"/>
    <property type="project" value="EnsemblFungi"/>
</dbReference>
<dbReference type="GO" id="GO:0010603">
    <property type="term" value="P:regulation of cytoplasmic mRNA processing body assembly"/>
    <property type="evidence" value="ECO:0007669"/>
    <property type="project" value="EnsemblFungi"/>
</dbReference>
<dbReference type="GO" id="GO:0000749">
    <property type="term" value="P:response to pheromone triggering conjugation with cellular fusion"/>
    <property type="evidence" value="ECO:0007669"/>
    <property type="project" value="EnsemblFungi"/>
</dbReference>
<dbReference type="GO" id="GO:0034063">
    <property type="term" value="P:stress granule assembly"/>
    <property type="evidence" value="ECO:0007669"/>
    <property type="project" value="EnsemblFungi"/>
</dbReference>
<dbReference type="CDD" id="cd17940">
    <property type="entry name" value="DEADc_DDX6"/>
    <property type="match status" value="1"/>
</dbReference>
<dbReference type="CDD" id="cd18787">
    <property type="entry name" value="SF2_C_DEAD"/>
    <property type="match status" value="1"/>
</dbReference>
<dbReference type="FunFam" id="3.40.50.300:FF:000364">
    <property type="entry name" value="ATP-dependent RNA helicase DDX6"/>
    <property type="match status" value="1"/>
</dbReference>
<dbReference type="Gene3D" id="3.40.50.300">
    <property type="entry name" value="P-loop containing nucleotide triphosphate hydrolases"/>
    <property type="match status" value="2"/>
</dbReference>
<dbReference type="InterPro" id="IPR011545">
    <property type="entry name" value="DEAD/DEAH_box_helicase_dom"/>
</dbReference>
<dbReference type="InterPro" id="IPR014001">
    <property type="entry name" value="Helicase_ATP-bd"/>
</dbReference>
<dbReference type="InterPro" id="IPR001650">
    <property type="entry name" value="Helicase_C-like"/>
</dbReference>
<dbReference type="InterPro" id="IPR027417">
    <property type="entry name" value="P-loop_NTPase"/>
</dbReference>
<dbReference type="InterPro" id="IPR000629">
    <property type="entry name" value="RNA-helicase_DEAD-box_CS"/>
</dbReference>
<dbReference type="InterPro" id="IPR014014">
    <property type="entry name" value="RNA_helicase_DEAD_Q_motif"/>
</dbReference>
<dbReference type="PANTHER" id="PTHR47960">
    <property type="entry name" value="DEAD-BOX ATP-DEPENDENT RNA HELICASE 50"/>
    <property type="match status" value="1"/>
</dbReference>
<dbReference type="Pfam" id="PF00270">
    <property type="entry name" value="DEAD"/>
    <property type="match status" value="1"/>
</dbReference>
<dbReference type="Pfam" id="PF00271">
    <property type="entry name" value="Helicase_C"/>
    <property type="match status" value="1"/>
</dbReference>
<dbReference type="SMART" id="SM00487">
    <property type="entry name" value="DEXDc"/>
    <property type="match status" value="1"/>
</dbReference>
<dbReference type="SMART" id="SM00490">
    <property type="entry name" value="HELICc"/>
    <property type="match status" value="1"/>
</dbReference>
<dbReference type="SUPFAM" id="SSF52540">
    <property type="entry name" value="P-loop containing nucleoside triphosphate hydrolases"/>
    <property type="match status" value="1"/>
</dbReference>
<dbReference type="PROSITE" id="PS00039">
    <property type="entry name" value="DEAD_ATP_HELICASE"/>
    <property type="match status" value="1"/>
</dbReference>
<dbReference type="PROSITE" id="PS51192">
    <property type="entry name" value="HELICASE_ATP_BIND_1"/>
    <property type="match status" value="1"/>
</dbReference>
<dbReference type="PROSITE" id="PS51194">
    <property type="entry name" value="HELICASE_CTER"/>
    <property type="match status" value="1"/>
</dbReference>
<dbReference type="PROSITE" id="PS51195">
    <property type="entry name" value="Q_MOTIF"/>
    <property type="match status" value="1"/>
</dbReference>